<comment type="function">
    <text evidence="1">Acts as a transcriptional repressor. May be involved in DNA damage-inducible cell cycle arrests (checkpoints) (By similarity).</text>
</comment>
<comment type="subunit">
    <text evidence="1">Interacts through its C-terminus with the C-terminus of SNW1/SKIP.</text>
</comment>
<comment type="subcellular location">
    <subcellularLocation>
        <location evidence="5">Nucleus</location>
    </subcellularLocation>
</comment>
<protein>
    <recommendedName>
        <fullName>Forkhead box protein N3</fullName>
    </recommendedName>
    <alternativeName>
        <fullName>Checkpoint suppressor 1</fullName>
    </alternativeName>
</protein>
<sequence length="485" mass="53307">MGPVMPPSKKPESPGISVSSGLSQCYRGSSFSKALQEDDDLDFSLPDIRLEEGAMEDEELTNLNWLHESKNLLKSFGDSVLRSVSPVQDLDDDTPPSPAHSDMPYDARQNPNCKPPYSFSCLIFMAIEDSPTKRLPVKDIYNWILEHFPYFANAPTGWKNSVRHNLSLNKCFKKVDKERSQSIGKGSLWCIDPEYRQNLIQALKKTPYHSHSNVFNTPPASPQAYQSTSGPPIWPGSTFFKRNGALLQDPDIDAASAMMLLNTPPEIQAGFPPGVIQNGARVLSRGLFPGVRPLPITPIGMTAAVRNGLTSCRMRTESEPSCGSPVVSGDPKEDHNYSSAKSSHARSTSPASDCVSSSSADDHYEFATKGGQEGSEGSFQSHESHSETEEDDRKCSPKEAKDALGDSGYASQHKKRQHFAKARKVPSDTLPLKKRRTEKPPESDDEEMKEAAGSLLHLAGIRSCLNNITNRTAKGQKEQKETTKN</sequence>
<accession>Q33BP8</accession>
<reference evidence="6" key="1">
    <citation type="journal article" date="2006" name="Anim. Genet.">
        <title>High-resolution physical mapping and construction of a porcine contig spanning the intramuscular fat content QTL.</title>
        <authorList>
            <person name="Sato S."/>
            <person name="Hasebe H."/>
            <person name="Sato S."/>
            <person name="Asahi Y."/>
            <person name="Hayashi T."/>
            <person name="Kobayashi E."/>
            <person name="Sugimoto Y."/>
        </authorList>
    </citation>
    <scope>NUCLEOTIDE SEQUENCE [MRNA]</scope>
    <source>
        <tissue evidence="6">Skeletal muscle</tissue>
    </source>
</reference>
<proteinExistence type="evidence at transcript level"/>
<dbReference type="EMBL" id="AB240453">
    <property type="protein sequence ID" value="BAE48220.1"/>
    <property type="molecule type" value="mRNA"/>
</dbReference>
<dbReference type="RefSeq" id="NP_001038001.1">
    <property type="nucleotide sequence ID" value="NM_001044536.1"/>
</dbReference>
<dbReference type="SMR" id="Q33BP8"/>
<dbReference type="FunCoup" id="Q33BP8">
    <property type="interactions" value="89"/>
</dbReference>
<dbReference type="STRING" id="9823.ENSSSCP00000054174"/>
<dbReference type="GlyGen" id="Q33BP8">
    <property type="glycosylation" value="1 site"/>
</dbReference>
<dbReference type="PaxDb" id="9823-ENSSSCP00000002629"/>
<dbReference type="GeneID" id="733584"/>
<dbReference type="KEGG" id="ssc:733584"/>
<dbReference type="CTD" id="1112"/>
<dbReference type="eggNOG" id="KOG2294">
    <property type="taxonomic scope" value="Eukaryota"/>
</dbReference>
<dbReference type="InParanoid" id="Q33BP8"/>
<dbReference type="OrthoDB" id="5954824at2759"/>
<dbReference type="Proteomes" id="UP000008227">
    <property type="component" value="Unplaced"/>
</dbReference>
<dbReference type="Proteomes" id="UP000314985">
    <property type="component" value="Unplaced"/>
</dbReference>
<dbReference type="Proteomes" id="UP000694570">
    <property type="component" value="Unplaced"/>
</dbReference>
<dbReference type="Proteomes" id="UP000694571">
    <property type="component" value="Unplaced"/>
</dbReference>
<dbReference type="Proteomes" id="UP000694720">
    <property type="component" value="Unplaced"/>
</dbReference>
<dbReference type="Proteomes" id="UP000694722">
    <property type="component" value="Unplaced"/>
</dbReference>
<dbReference type="Proteomes" id="UP000694723">
    <property type="component" value="Unplaced"/>
</dbReference>
<dbReference type="Proteomes" id="UP000694724">
    <property type="component" value="Unplaced"/>
</dbReference>
<dbReference type="Proteomes" id="UP000694725">
    <property type="component" value="Unplaced"/>
</dbReference>
<dbReference type="Proteomes" id="UP000694726">
    <property type="component" value="Unplaced"/>
</dbReference>
<dbReference type="Proteomes" id="UP000694727">
    <property type="component" value="Unplaced"/>
</dbReference>
<dbReference type="Proteomes" id="UP000694728">
    <property type="component" value="Unplaced"/>
</dbReference>
<dbReference type="GO" id="GO:0005634">
    <property type="term" value="C:nucleus"/>
    <property type="evidence" value="ECO:0000318"/>
    <property type="project" value="GO_Central"/>
</dbReference>
<dbReference type="GO" id="GO:0000987">
    <property type="term" value="F:cis-regulatory region sequence-specific DNA binding"/>
    <property type="evidence" value="ECO:0000318"/>
    <property type="project" value="GO_Central"/>
</dbReference>
<dbReference type="GO" id="GO:0003700">
    <property type="term" value="F:DNA-binding transcription factor activity"/>
    <property type="evidence" value="ECO:0000318"/>
    <property type="project" value="GO_Central"/>
</dbReference>
<dbReference type="GO" id="GO:0006355">
    <property type="term" value="P:regulation of DNA-templated transcription"/>
    <property type="evidence" value="ECO:0000318"/>
    <property type="project" value="GO_Central"/>
</dbReference>
<dbReference type="CDD" id="cd20059">
    <property type="entry name" value="FH_FOXN3"/>
    <property type="match status" value="1"/>
</dbReference>
<dbReference type="FunFam" id="1.10.10.10:FF:000167">
    <property type="entry name" value="forkhead box protein N3 isoform X1"/>
    <property type="match status" value="1"/>
</dbReference>
<dbReference type="Gene3D" id="1.10.10.10">
    <property type="entry name" value="Winged helix-like DNA-binding domain superfamily/Winged helix DNA-binding domain"/>
    <property type="match status" value="1"/>
</dbReference>
<dbReference type="InterPro" id="IPR047404">
    <property type="entry name" value="FH_FOXN3"/>
</dbReference>
<dbReference type="InterPro" id="IPR001766">
    <property type="entry name" value="Fork_head_dom"/>
</dbReference>
<dbReference type="InterPro" id="IPR047119">
    <property type="entry name" value="FOXN2/3-like"/>
</dbReference>
<dbReference type="InterPro" id="IPR018122">
    <property type="entry name" value="TF_fork_head_CS_1"/>
</dbReference>
<dbReference type="InterPro" id="IPR030456">
    <property type="entry name" value="TF_fork_head_CS_2"/>
</dbReference>
<dbReference type="InterPro" id="IPR036388">
    <property type="entry name" value="WH-like_DNA-bd_sf"/>
</dbReference>
<dbReference type="InterPro" id="IPR036390">
    <property type="entry name" value="WH_DNA-bd_sf"/>
</dbReference>
<dbReference type="PANTHER" id="PTHR13962:SF20">
    <property type="entry name" value="FORKHEAD BOX PROTEIN N3"/>
    <property type="match status" value="1"/>
</dbReference>
<dbReference type="PANTHER" id="PTHR13962">
    <property type="entry name" value="FORKHEAD BOX PROTEIN N3-LIKE PROTEIN-RELATED"/>
    <property type="match status" value="1"/>
</dbReference>
<dbReference type="Pfam" id="PF00250">
    <property type="entry name" value="Forkhead"/>
    <property type="match status" value="1"/>
</dbReference>
<dbReference type="PRINTS" id="PR00053">
    <property type="entry name" value="FORKHEAD"/>
</dbReference>
<dbReference type="SMART" id="SM00339">
    <property type="entry name" value="FH"/>
    <property type="match status" value="1"/>
</dbReference>
<dbReference type="SUPFAM" id="SSF46785">
    <property type="entry name" value="Winged helix' DNA-binding domain"/>
    <property type="match status" value="1"/>
</dbReference>
<dbReference type="PROSITE" id="PS00657">
    <property type="entry name" value="FORK_HEAD_1"/>
    <property type="match status" value="1"/>
</dbReference>
<dbReference type="PROSITE" id="PS00658">
    <property type="entry name" value="FORK_HEAD_2"/>
    <property type="match status" value="1"/>
</dbReference>
<dbReference type="PROSITE" id="PS50039">
    <property type="entry name" value="FORK_HEAD_3"/>
    <property type="match status" value="1"/>
</dbReference>
<name>FOXN3_PIG</name>
<keyword id="KW-0131">Cell cycle</keyword>
<keyword id="KW-0238">DNA-binding</keyword>
<keyword id="KW-0539">Nucleus</keyword>
<keyword id="KW-0597">Phosphoprotein</keyword>
<keyword id="KW-1185">Reference proteome</keyword>
<keyword id="KW-0678">Repressor</keyword>
<keyword id="KW-0804">Transcription</keyword>
<keyword id="KW-0805">Transcription regulation</keyword>
<evidence type="ECO:0000250" key="1">
    <source>
        <dbReference type="UniProtKB" id="O00409"/>
    </source>
</evidence>
<evidence type="ECO:0000250" key="2">
    <source>
        <dbReference type="UniProtKB" id="Q499D0"/>
    </source>
</evidence>
<evidence type="ECO:0000255" key="3">
    <source>
        <dbReference type="PROSITE-ProRule" id="PRU00089"/>
    </source>
</evidence>
<evidence type="ECO:0000256" key="4">
    <source>
        <dbReference type="SAM" id="MobiDB-lite"/>
    </source>
</evidence>
<evidence type="ECO:0000305" key="5"/>
<evidence type="ECO:0000312" key="6">
    <source>
        <dbReference type="EMBL" id="BAE48220.1"/>
    </source>
</evidence>
<organism>
    <name type="scientific">Sus scrofa</name>
    <name type="common">Pig</name>
    <dbReference type="NCBI Taxonomy" id="9823"/>
    <lineage>
        <taxon>Eukaryota</taxon>
        <taxon>Metazoa</taxon>
        <taxon>Chordata</taxon>
        <taxon>Craniata</taxon>
        <taxon>Vertebrata</taxon>
        <taxon>Euteleostomi</taxon>
        <taxon>Mammalia</taxon>
        <taxon>Eutheria</taxon>
        <taxon>Laurasiatheria</taxon>
        <taxon>Artiodactyla</taxon>
        <taxon>Suina</taxon>
        <taxon>Suidae</taxon>
        <taxon>Sus</taxon>
    </lineage>
</organism>
<feature type="chain" id="PRO_0000245103" description="Forkhead box protein N3">
    <location>
        <begin position="1"/>
        <end position="485"/>
    </location>
</feature>
<feature type="DNA-binding region" description="Fork-head" evidence="3">
    <location>
        <begin position="114"/>
        <end position="210"/>
    </location>
</feature>
<feature type="region of interest" description="Disordered" evidence="4">
    <location>
        <begin position="1"/>
        <end position="21"/>
    </location>
</feature>
<feature type="region of interest" description="Disordered" evidence="4">
    <location>
        <begin position="86"/>
        <end position="108"/>
    </location>
</feature>
<feature type="region of interest" description="Disordered" evidence="4">
    <location>
        <begin position="315"/>
        <end position="454"/>
    </location>
</feature>
<feature type="compositionally biased region" description="Low complexity" evidence="4">
    <location>
        <begin position="338"/>
        <end position="359"/>
    </location>
</feature>
<feature type="compositionally biased region" description="Basic and acidic residues" evidence="4">
    <location>
        <begin position="382"/>
        <end position="404"/>
    </location>
</feature>
<feature type="compositionally biased region" description="Basic residues" evidence="4">
    <location>
        <begin position="412"/>
        <end position="424"/>
    </location>
</feature>
<feature type="modified residue" description="Phosphoserine" evidence="2">
    <location>
        <position position="83"/>
    </location>
</feature>
<feature type="modified residue" description="Phosphoserine" evidence="1">
    <location>
        <position position="85"/>
    </location>
</feature>
<feature type="modified residue" description="Phosphoserine" evidence="2">
    <location>
        <position position="97"/>
    </location>
</feature>
<feature type="modified residue" description="Phosphoserine" evidence="2">
    <location>
        <position position="443"/>
    </location>
</feature>
<gene>
    <name type="primary">FOXN3</name>
    <name type="synonym">CHES1</name>
</gene>